<name>NDA8A_ARATH</name>
<accession>Q9SQT4</accession>
<keyword id="KW-0025">Alternative splicing</keyword>
<keyword id="KW-1015">Disulfide bond</keyword>
<keyword id="KW-0249">Electron transport</keyword>
<keyword id="KW-0496">Mitochondrion</keyword>
<keyword id="KW-1185">Reference proteome</keyword>
<keyword id="KW-0677">Repeat</keyword>
<keyword id="KW-0679">Respiratory chain</keyword>
<keyword id="KW-0813">Transport</keyword>
<feature type="chain" id="PRO_0000410932" description="NADH dehydrogenase [ubiquinone] 1 alpha subcomplex subunit 8-A">
    <location>
        <begin position="1"/>
        <end position="108"/>
    </location>
</feature>
<feature type="domain" description="CHCH 1" evidence="2">
    <location>
        <begin position="28"/>
        <end position="69"/>
    </location>
</feature>
<feature type="domain" description="CHCH 2" evidence="2">
    <location>
        <begin position="70"/>
        <end position="108"/>
    </location>
</feature>
<feature type="short sequence motif" description="Cx9C motif 1" evidence="2">
    <location>
        <begin position="31"/>
        <end position="41"/>
    </location>
</feature>
<feature type="short sequence motif" description="Cx9C motif 2" evidence="2">
    <location>
        <begin position="51"/>
        <end position="61"/>
    </location>
</feature>
<feature type="short sequence motif" description="Cx9C motif 3" evidence="2">
    <location>
        <begin position="73"/>
        <end position="83"/>
    </location>
</feature>
<feature type="short sequence motif" description="Cx10C motif" evidence="2">
    <location>
        <begin position="94"/>
        <end position="105"/>
    </location>
</feature>
<feature type="disulfide bond" evidence="2">
    <location>
        <begin position="31"/>
        <end position="61"/>
    </location>
</feature>
<feature type="disulfide bond" evidence="2">
    <location>
        <begin position="41"/>
        <end position="51"/>
    </location>
</feature>
<feature type="disulfide bond" evidence="2">
    <location>
        <begin position="73"/>
        <end position="105"/>
    </location>
</feature>
<feature type="disulfide bond" evidence="2">
    <location>
        <begin position="83"/>
        <end position="94"/>
    </location>
</feature>
<sequence>MEANAAVDGTGNPIPTSAVLTASAKHIGIRCMPENMAFLKCKKNDPNPEKCLEKGRDVTRCVLGLLKDLHQRCPKEMDAYVGCMYYYTNEFELCRKEQEAFEKVCPLK</sequence>
<protein>
    <recommendedName>
        <fullName>NADH dehydrogenase [ubiquinone] 1 alpha subcomplex subunit 8-A</fullName>
    </recommendedName>
</protein>
<evidence type="ECO:0000250" key="1"/>
<evidence type="ECO:0000255" key="2">
    <source>
        <dbReference type="PROSITE-ProRule" id="PRU01150"/>
    </source>
</evidence>
<evidence type="ECO:0000305" key="3"/>
<comment type="function">
    <text evidence="1">Accessory subunit of the mitochondrial membrane respiratory chain NADH dehydrogenase (Complex I), that is believed not to be involved in catalysis. Complex I functions in the transfer of electrons from NADH to the respiratory chain. The immediate electron acceptor for the enzyme is believed to be ubiquinone (By similarity).</text>
</comment>
<comment type="subunit">
    <text>Complex I is composed of at least 49 different subunits.</text>
</comment>
<comment type="subcellular location">
    <subcellularLocation>
        <location evidence="1">Mitochondrion</location>
    </subcellularLocation>
    <subcellularLocation>
        <location evidence="1">Mitochondrion intermembrane space</location>
    </subcellularLocation>
</comment>
<comment type="alternative products">
    <event type="alternative splicing"/>
    <isoform>
        <id>Q9SQT4-1</id>
        <name>1</name>
        <sequence type="displayed"/>
    </isoform>
    <text>A number of isoforms are produced. According to EST sequences.</text>
</comment>
<comment type="domain">
    <text evidence="1">Contains four C-X9-C motifs that are predicted to form a helix-coil-helix structure, permitting the formation of intramolecular disulfide bonds.</text>
</comment>
<comment type="similarity">
    <text evidence="3">Belongs to the complex I NDUFA8 subunit family.</text>
</comment>
<organism>
    <name type="scientific">Arabidopsis thaliana</name>
    <name type="common">Mouse-ear cress</name>
    <dbReference type="NCBI Taxonomy" id="3702"/>
    <lineage>
        <taxon>Eukaryota</taxon>
        <taxon>Viridiplantae</taxon>
        <taxon>Streptophyta</taxon>
        <taxon>Embryophyta</taxon>
        <taxon>Tracheophyta</taxon>
        <taxon>Spermatophyta</taxon>
        <taxon>Magnoliopsida</taxon>
        <taxon>eudicotyledons</taxon>
        <taxon>Gunneridae</taxon>
        <taxon>Pentapetalae</taxon>
        <taxon>rosids</taxon>
        <taxon>malvids</taxon>
        <taxon>Brassicales</taxon>
        <taxon>Brassicaceae</taxon>
        <taxon>Camelineae</taxon>
        <taxon>Arabidopsis</taxon>
    </lineage>
</organism>
<gene>
    <name type="ordered locus">At3g06310</name>
    <name type="ORF">F24P17.23</name>
</gene>
<reference key="1">
    <citation type="journal article" date="2000" name="Nature">
        <title>Sequence and analysis of chromosome 3 of the plant Arabidopsis thaliana.</title>
        <authorList>
            <person name="Salanoubat M."/>
            <person name="Lemcke K."/>
            <person name="Rieger M."/>
            <person name="Ansorge W."/>
            <person name="Unseld M."/>
            <person name="Fartmann B."/>
            <person name="Valle G."/>
            <person name="Bloecker H."/>
            <person name="Perez-Alonso M."/>
            <person name="Obermaier B."/>
            <person name="Delseny M."/>
            <person name="Boutry M."/>
            <person name="Grivell L.A."/>
            <person name="Mache R."/>
            <person name="Puigdomenech P."/>
            <person name="De Simone V."/>
            <person name="Choisne N."/>
            <person name="Artiguenave F."/>
            <person name="Robert C."/>
            <person name="Brottier P."/>
            <person name="Wincker P."/>
            <person name="Cattolico L."/>
            <person name="Weissenbach J."/>
            <person name="Saurin W."/>
            <person name="Quetier F."/>
            <person name="Schaefer M."/>
            <person name="Mueller-Auer S."/>
            <person name="Gabel C."/>
            <person name="Fuchs M."/>
            <person name="Benes V."/>
            <person name="Wurmbach E."/>
            <person name="Drzonek H."/>
            <person name="Erfle H."/>
            <person name="Jordan N."/>
            <person name="Bangert S."/>
            <person name="Wiedelmann R."/>
            <person name="Kranz H."/>
            <person name="Voss H."/>
            <person name="Holland R."/>
            <person name="Brandt P."/>
            <person name="Nyakatura G."/>
            <person name="Vezzi A."/>
            <person name="D'Angelo M."/>
            <person name="Pallavicini A."/>
            <person name="Toppo S."/>
            <person name="Simionati B."/>
            <person name="Conrad A."/>
            <person name="Hornischer K."/>
            <person name="Kauer G."/>
            <person name="Loehnert T.-H."/>
            <person name="Nordsiek G."/>
            <person name="Reichelt J."/>
            <person name="Scharfe M."/>
            <person name="Schoen O."/>
            <person name="Bargues M."/>
            <person name="Terol J."/>
            <person name="Climent J."/>
            <person name="Navarro P."/>
            <person name="Collado C."/>
            <person name="Perez-Perez A."/>
            <person name="Ottenwaelder B."/>
            <person name="Duchemin D."/>
            <person name="Cooke R."/>
            <person name="Laudie M."/>
            <person name="Berger-Llauro C."/>
            <person name="Purnelle B."/>
            <person name="Masuy D."/>
            <person name="de Haan M."/>
            <person name="Maarse A.C."/>
            <person name="Alcaraz J.-P."/>
            <person name="Cottet A."/>
            <person name="Casacuberta E."/>
            <person name="Monfort A."/>
            <person name="Argiriou A."/>
            <person name="Flores M."/>
            <person name="Liguori R."/>
            <person name="Vitale D."/>
            <person name="Mannhaupt G."/>
            <person name="Haase D."/>
            <person name="Schoof H."/>
            <person name="Rudd S."/>
            <person name="Zaccaria P."/>
            <person name="Mewes H.-W."/>
            <person name="Mayer K.F.X."/>
            <person name="Kaul S."/>
            <person name="Town C.D."/>
            <person name="Koo H.L."/>
            <person name="Tallon L.J."/>
            <person name="Jenkins J."/>
            <person name="Rooney T."/>
            <person name="Rizzo M."/>
            <person name="Walts A."/>
            <person name="Utterback T."/>
            <person name="Fujii C.Y."/>
            <person name="Shea T.P."/>
            <person name="Creasy T.H."/>
            <person name="Haas B."/>
            <person name="Maiti R."/>
            <person name="Wu D."/>
            <person name="Peterson J."/>
            <person name="Van Aken S."/>
            <person name="Pai G."/>
            <person name="Militscher J."/>
            <person name="Sellers P."/>
            <person name="Gill J.E."/>
            <person name="Feldblyum T.V."/>
            <person name="Preuss D."/>
            <person name="Lin X."/>
            <person name="Nierman W.C."/>
            <person name="Salzberg S.L."/>
            <person name="White O."/>
            <person name="Venter J.C."/>
            <person name="Fraser C.M."/>
            <person name="Kaneko T."/>
            <person name="Nakamura Y."/>
            <person name="Sato S."/>
            <person name="Kato T."/>
            <person name="Asamizu E."/>
            <person name="Sasamoto S."/>
            <person name="Kimura T."/>
            <person name="Idesawa K."/>
            <person name="Kawashima K."/>
            <person name="Kishida Y."/>
            <person name="Kiyokawa C."/>
            <person name="Kohara M."/>
            <person name="Matsumoto M."/>
            <person name="Matsuno A."/>
            <person name="Muraki A."/>
            <person name="Nakayama S."/>
            <person name="Nakazaki N."/>
            <person name="Shinpo S."/>
            <person name="Takeuchi C."/>
            <person name="Wada T."/>
            <person name="Watanabe A."/>
            <person name="Yamada M."/>
            <person name="Yasuda M."/>
            <person name="Tabata S."/>
        </authorList>
    </citation>
    <scope>NUCLEOTIDE SEQUENCE [LARGE SCALE GENOMIC DNA]</scope>
    <source>
        <strain>cv. Columbia</strain>
    </source>
</reference>
<reference key="2">
    <citation type="journal article" date="2017" name="Plant J.">
        <title>Araport11: a complete reannotation of the Arabidopsis thaliana reference genome.</title>
        <authorList>
            <person name="Cheng C.Y."/>
            <person name="Krishnakumar V."/>
            <person name="Chan A.P."/>
            <person name="Thibaud-Nissen F."/>
            <person name="Schobel S."/>
            <person name="Town C.D."/>
        </authorList>
    </citation>
    <scope>GENOME REANNOTATION</scope>
    <source>
        <strain>cv. Columbia</strain>
    </source>
</reference>
<reference key="3">
    <citation type="journal article" date="2003" name="Science">
        <title>Empirical analysis of transcriptional activity in the Arabidopsis genome.</title>
        <authorList>
            <person name="Yamada K."/>
            <person name="Lim J."/>
            <person name="Dale J.M."/>
            <person name="Chen H."/>
            <person name="Shinn P."/>
            <person name="Palm C.J."/>
            <person name="Southwick A.M."/>
            <person name="Wu H.C."/>
            <person name="Kim C.J."/>
            <person name="Nguyen M."/>
            <person name="Pham P.K."/>
            <person name="Cheuk R.F."/>
            <person name="Karlin-Newmann G."/>
            <person name="Liu S.X."/>
            <person name="Lam B."/>
            <person name="Sakano H."/>
            <person name="Wu T."/>
            <person name="Yu G."/>
            <person name="Miranda M."/>
            <person name="Quach H.L."/>
            <person name="Tripp M."/>
            <person name="Chang C.H."/>
            <person name="Lee J.M."/>
            <person name="Toriumi M.J."/>
            <person name="Chan M.M."/>
            <person name="Tang C.C."/>
            <person name="Onodera C.S."/>
            <person name="Deng J.M."/>
            <person name="Akiyama K."/>
            <person name="Ansari Y."/>
            <person name="Arakawa T."/>
            <person name="Banh J."/>
            <person name="Banno F."/>
            <person name="Bowser L."/>
            <person name="Brooks S.Y."/>
            <person name="Carninci P."/>
            <person name="Chao Q."/>
            <person name="Choy N."/>
            <person name="Enju A."/>
            <person name="Goldsmith A.D."/>
            <person name="Gurjal M."/>
            <person name="Hansen N.F."/>
            <person name="Hayashizaki Y."/>
            <person name="Johnson-Hopson C."/>
            <person name="Hsuan V.W."/>
            <person name="Iida K."/>
            <person name="Karnes M."/>
            <person name="Khan S."/>
            <person name="Koesema E."/>
            <person name="Ishida J."/>
            <person name="Jiang P.X."/>
            <person name="Jones T."/>
            <person name="Kawai J."/>
            <person name="Kamiya A."/>
            <person name="Meyers C."/>
            <person name="Nakajima M."/>
            <person name="Narusaka M."/>
            <person name="Seki M."/>
            <person name="Sakurai T."/>
            <person name="Satou M."/>
            <person name="Tamse R."/>
            <person name="Vaysberg M."/>
            <person name="Wallender E.K."/>
            <person name="Wong C."/>
            <person name="Yamamura Y."/>
            <person name="Yuan S."/>
            <person name="Shinozaki K."/>
            <person name="Davis R.W."/>
            <person name="Theologis A."/>
            <person name="Ecker J.R."/>
        </authorList>
    </citation>
    <scope>NUCLEOTIDE SEQUENCE [LARGE SCALE MRNA]</scope>
    <source>
        <strain>cv. Columbia</strain>
    </source>
</reference>
<reference key="4">
    <citation type="submission" date="2002-03" db="EMBL/GenBank/DDBJ databases">
        <title>Full-length cDNA from Arabidopsis thaliana.</title>
        <authorList>
            <person name="Brover V.V."/>
            <person name="Troukhan M.E."/>
            <person name="Alexandrov N.A."/>
            <person name="Lu Y.-P."/>
            <person name="Flavell R.B."/>
            <person name="Feldmann K.A."/>
        </authorList>
    </citation>
    <scope>NUCLEOTIDE SEQUENCE [LARGE SCALE MRNA]</scope>
</reference>
<proteinExistence type="inferred from homology"/>
<dbReference type="EMBL" id="AC011623">
    <property type="protein sequence ID" value="AAF08582.1"/>
    <property type="molecule type" value="Genomic_DNA"/>
</dbReference>
<dbReference type="EMBL" id="CP002686">
    <property type="protein sequence ID" value="AEE74371.1"/>
    <property type="molecule type" value="Genomic_DNA"/>
</dbReference>
<dbReference type="EMBL" id="CP002686">
    <property type="protein sequence ID" value="AEE74373.1"/>
    <property type="molecule type" value="Genomic_DNA"/>
</dbReference>
<dbReference type="EMBL" id="AY093230">
    <property type="protein sequence ID" value="AAM13229.1"/>
    <property type="molecule type" value="mRNA"/>
</dbReference>
<dbReference type="EMBL" id="AY128825">
    <property type="protein sequence ID" value="AAM91225.1"/>
    <property type="molecule type" value="mRNA"/>
</dbReference>
<dbReference type="EMBL" id="AY087020">
    <property type="protein sequence ID" value="AAM64581.1"/>
    <property type="molecule type" value="mRNA"/>
</dbReference>
<dbReference type="RefSeq" id="NP_001189824.1">
    <molecule id="Q9SQT4-1"/>
    <property type="nucleotide sequence ID" value="NM_001202895.1"/>
</dbReference>
<dbReference type="RefSeq" id="NP_566280.1">
    <molecule id="Q9SQT4-1"/>
    <property type="nucleotide sequence ID" value="NM_111506.5"/>
</dbReference>
<dbReference type="SMR" id="Q9SQT4"/>
<dbReference type="FunCoup" id="Q9SQT4">
    <property type="interactions" value="2607"/>
</dbReference>
<dbReference type="IntAct" id="Q9SQT4">
    <property type="interactions" value="1"/>
</dbReference>
<dbReference type="STRING" id="3702.Q9SQT4"/>
<dbReference type="PaxDb" id="3702-AT3G06310.1"/>
<dbReference type="ProteomicsDB" id="236815">
    <molecule id="Q9SQT4-1"/>
</dbReference>
<dbReference type="EnsemblPlants" id="AT3G06310.1">
    <molecule id="Q9SQT4-1"/>
    <property type="protein sequence ID" value="AT3G06310.1"/>
    <property type="gene ID" value="AT3G06310"/>
</dbReference>
<dbReference type="EnsemblPlants" id="AT3G06310.3">
    <molecule id="Q9SQT4-1"/>
    <property type="protein sequence ID" value="AT3G06310.3"/>
    <property type="gene ID" value="AT3G06310"/>
</dbReference>
<dbReference type="GeneID" id="819805"/>
<dbReference type="Gramene" id="AT3G06310.1">
    <molecule id="Q9SQT4-1"/>
    <property type="protein sequence ID" value="AT3G06310.1"/>
    <property type="gene ID" value="AT3G06310"/>
</dbReference>
<dbReference type="Gramene" id="AT3G06310.3">
    <molecule id="Q9SQT4-1"/>
    <property type="protein sequence ID" value="AT3G06310.3"/>
    <property type="gene ID" value="AT3G06310"/>
</dbReference>
<dbReference type="KEGG" id="ath:AT3G06310"/>
<dbReference type="Araport" id="AT3G06310"/>
<dbReference type="TAIR" id="AT3G06310"/>
<dbReference type="eggNOG" id="KOG3458">
    <property type="taxonomic scope" value="Eukaryota"/>
</dbReference>
<dbReference type="HOGENOM" id="CLU_156825_0_0_1"/>
<dbReference type="InParanoid" id="Q9SQT4"/>
<dbReference type="OMA" id="RIENMAF"/>
<dbReference type="PhylomeDB" id="Q9SQT4"/>
<dbReference type="PRO" id="PR:Q9SQT4"/>
<dbReference type="Proteomes" id="UP000006548">
    <property type="component" value="Chromosome 3"/>
</dbReference>
<dbReference type="ExpressionAtlas" id="Q9SQT4">
    <property type="expression patterns" value="baseline and differential"/>
</dbReference>
<dbReference type="GO" id="GO:0005758">
    <property type="term" value="C:mitochondrial intermembrane space"/>
    <property type="evidence" value="ECO:0007669"/>
    <property type="project" value="UniProtKB-SubCell"/>
</dbReference>
<dbReference type="GO" id="GO:0009536">
    <property type="term" value="C:plastid"/>
    <property type="evidence" value="ECO:0007005"/>
    <property type="project" value="TAIR"/>
</dbReference>
<dbReference type="GO" id="GO:0006120">
    <property type="term" value="P:mitochondrial electron transport, NADH to ubiquinone"/>
    <property type="evidence" value="ECO:0007669"/>
    <property type="project" value="InterPro"/>
</dbReference>
<dbReference type="InterPro" id="IPR010625">
    <property type="entry name" value="CHCH"/>
</dbReference>
<dbReference type="InterPro" id="IPR016680">
    <property type="entry name" value="NDUFA8"/>
</dbReference>
<dbReference type="PANTHER" id="PTHR13344:SF0">
    <property type="entry name" value="NADH DEHYDROGENASE [UBIQUINONE] 1 ALPHA SUBCOMPLEX SUBUNIT 8"/>
    <property type="match status" value="1"/>
</dbReference>
<dbReference type="PANTHER" id="PTHR13344">
    <property type="entry name" value="NADH-UBIQUINONE OXIDOREDUCTASE"/>
    <property type="match status" value="1"/>
</dbReference>
<dbReference type="Pfam" id="PF06747">
    <property type="entry name" value="CHCH"/>
    <property type="match status" value="1"/>
</dbReference>
<dbReference type="PROSITE" id="PS51808">
    <property type="entry name" value="CHCH"/>
    <property type="match status" value="2"/>
</dbReference>